<name>GRXS6_ORYSJ</name>
<gene>
    <name type="primary">GRXS6</name>
    <name type="ordered locus">Os02g0646400</name>
    <name type="ordered locus">LOC_Os02g43180</name>
    <name evidence="5" type="ORF">OsJ_07715</name>
    <name type="ORF">P0030D07.29</name>
    <name type="ORF">P0519A12.14</name>
</gene>
<proteinExistence type="evidence at transcript level"/>
<keyword id="KW-0001">2Fe-2S</keyword>
<keyword id="KW-0963">Cytoplasm</keyword>
<keyword id="KW-0408">Iron</keyword>
<keyword id="KW-0411">Iron-sulfur</keyword>
<keyword id="KW-0479">Metal-binding</keyword>
<keyword id="KW-0676">Redox-active center</keyword>
<keyword id="KW-1185">Reference proteome</keyword>
<reference key="1">
    <citation type="journal article" date="2005" name="Nature">
        <title>The map-based sequence of the rice genome.</title>
        <authorList>
            <consortium name="International rice genome sequencing project (IRGSP)"/>
        </authorList>
    </citation>
    <scope>NUCLEOTIDE SEQUENCE [LARGE SCALE GENOMIC DNA]</scope>
    <source>
        <strain>cv. Nipponbare</strain>
    </source>
</reference>
<reference key="2">
    <citation type="journal article" date="2008" name="Nucleic Acids Res.">
        <title>The rice annotation project database (RAP-DB): 2008 update.</title>
        <authorList>
            <consortium name="The rice annotation project (RAP)"/>
        </authorList>
    </citation>
    <scope>GENOME REANNOTATION</scope>
    <source>
        <strain>cv. Nipponbare</strain>
    </source>
</reference>
<reference key="3">
    <citation type="journal article" date="2013" name="Rice">
        <title>Improvement of the Oryza sativa Nipponbare reference genome using next generation sequence and optical map data.</title>
        <authorList>
            <person name="Kawahara Y."/>
            <person name="de la Bastide M."/>
            <person name="Hamilton J.P."/>
            <person name="Kanamori H."/>
            <person name="McCombie W.R."/>
            <person name="Ouyang S."/>
            <person name="Schwartz D.C."/>
            <person name="Tanaka T."/>
            <person name="Wu J."/>
            <person name="Zhou S."/>
            <person name="Childs K.L."/>
            <person name="Davidson R.M."/>
            <person name="Lin H."/>
            <person name="Quesada-Ocampo L."/>
            <person name="Vaillancourt B."/>
            <person name="Sakai H."/>
            <person name="Lee S.S."/>
            <person name="Kim J."/>
            <person name="Numa H."/>
            <person name="Itoh T."/>
            <person name="Buell C.R."/>
            <person name="Matsumoto T."/>
        </authorList>
    </citation>
    <scope>GENOME REANNOTATION</scope>
    <source>
        <strain>cv. Nipponbare</strain>
    </source>
</reference>
<reference key="4">
    <citation type="journal article" date="2005" name="PLoS Biol.">
        <title>The genomes of Oryza sativa: a history of duplications.</title>
        <authorList>
            <person name="Yu J."/>
            <person name="Wang J."/>
            <person name="Lin W."/>
            <person name="Li S."/>
            <person name="Li H."/>
            <person name="Zhou J."/>
            <person name="Ni P."/>
            <person name="Dong W."/>
            <person name="Hu S."/>
            <person name="Zeng C."/>
            <person name="Zhang J."/>
            <person name="Zhang Y."/>
            <person name="Li R."/>
            <person name="Xu Z."/>
            <person name="Li S."/>
            <person name="Li X."/>
            <person name="Zheng H."/>
            <person name="Cong L."/>
            <person name="Lin L."/>
            <person name="Yin J."/>
            <person name="Geng J."/>
            <person name="Li G."/>
            <person name="Shi J."/>
            <person name="Liu J."/>
            <person name="Lv H."/>
            <person name="Li J."/>
            <person name="Wang J."/>
            <person name="Deng Y."/>
            <person name="Ran L."/>
            <person name="Shi X."/>
            <person name="Wang X."/>
            <person name="Wu Q."/>
            <person name="Li C."/>
            <person name="Ren X."/>
            <person name="Wang J."/>
            <person name="Wang X."/>
            <person name="Li D."/>
            <person name="Liu D."/>
            <person name="Zhang X."/>
            <person name="Ji Z."/>
            <person name="Zhao W."/>
            <person name="Sun Y."/>
            <person name="Zhang Z."/>
            <person name="Bao J."/>
            <person name="Han Y."/>
            <person name="Dong L."/>
            <person name="Ji J."/>
            <person name="Chen P."/>
            <person name="Wu S."/>
            <person name="Liu J."/>
            <person name="Xiao Y."/>
            <person name="Bu D."/>
            <person name="Tan J."/>
            <person name="Yang L."/>
            <person name="Ye C."/>
            <person name="Zhang J."/>
            <person name="Xu J."/>
            <person name="Zhou Y."/>
            <person name="Yu Y."/>
            <person name="Zhang B."/>
            <person name="Zhuang S."/>
            <person name="Wei H."/>
            <person name="Liu B."/>
            <person name="Lei M."/>
            <person name="Yu H."/>
            <person name="Li Y."/>
            <person name="Xu H."/>
            <person name="Wei S."/>
            <person name="He X."/>
            <person name="Fang L."/>
            <person name="Zhang Z."/>
            <person name="Zhang Y."/>
            <person name="Huang X."/>
            <person name="Su Z."/>
            <person name="Tong W."/>
            <person name="Li J."/>
            <person name="Tong Z."/>
            <person name="Li S."/>
            <person name="Ye J."/>
            <person name="Wang L."/>
            <person name="Fang L."/>
            <person name="Lei T."/>
            <person name="Chen C.-S."/>
            <person name="Chen H.-C."/>
            <person name="Xu Z."/>
            <person name="Li H."/>
            <person name="Huang H."/>
            <person name="Zhang F."/>
            <person name="Xu H."/>
            <person name="Li N."/>
            <person name="Zhao C."/>
            <person name="Li S."/>
            <person name="Dong L."/>
            <person name="Huang Y."/>
            <person name="Li L."/>
            <person name="Xi Y."/>
            <person name="Qi Q."/>
            <person name="Li W."/>
            <person name="Zhang B."/>
            <person name="Hu W."/>
            <person name="Zhang Y."/>
            <person name="Tian X."/>
            <person name="Jiao Y."/>
            <person name="Liang X."/>
            <person name="Jin J."/>
            <person name="Gao L."/>
            <person name="Zheng W."/>
            <person name="Hao B."/>
            <person name="Liu S.-M."/>
            <person name="Wang W."/>
            <person name="Yuan L."/>
            <person name="Cao M."/>
            <person name="McDermott J."/>
            <person name="Samudrala R."/>
            <person name="Wang J."/>
            <person name="Wong G.K.-S."/>
            <person name="Yang H."/>
        </authorList>
    </citation>
    <scope>NUCLEOTIDE SEQUENCE [LARGE SCALE GENOMIC DNA]</scope>
    <source>
        <strain>cv. Nipponbare</strain>
    </source>
</reference>
<reference key="5">
    <citation type="journal article" date="2003" name="Science">
        <title>Collection, mapping, and annotation of over 28,000 cDNA clones from japonica rice.</title>
        <authorList>
            <consortium name="The rice full-length cDNA consortium"/>
        </authorList>
    </citation>
    <scope>NUCLEOTIDE SEQUENCE [LARGE SCALE MRNA]</scope>
    <source>
        <strain>cv. Nipponbare</strain>
    </source>
</reference>
<reference key="6">
    <citation type="journal article" date="2006" name="J. Exp. Bot.">
        <title>Genome-wide analysis of plant glutaredoxin systems.</title>
        <authorList>
            <person name="Rouhier N."/>
            <person name="Couturier J."/>
            <person name="Jacquot J.-P."/>
        </authorList>
    </citation>
    <scope>GENE FAMILY</scope>
</reference>
<comment type="function">
    <text evidence="4">May only reduce GSH-thiol disulfides, but not protein disulfides.</text>
</comment>
<comment type="subcellular location">
    <subcellularLocation>
        <location evidence="1">Cytoplasm</location>
    </subcellularLocation>
</comment>
<comment type="similarity">
    <text evidence="4">Belongs to the glutaredoxin family. CPYC subfamily.</text>
</comment>
<protein>
    <recommendedName>
        <fullName>Monothiol glutaredoxin-S6</fullName>
    </recommendedName>
</protein>
<organism>
    <name type="scientific">Oryza sativa subsp. japonica</name>
    <name type="common">Rice</name>
    <dbReference type="NCBI Taxonomy" id="39947"/>
    <lineage>
        <taxon>Eukaryota</taxon>
        <taxon>Viridiplantae</taxon>
        <taxon>Streptophyta</taxon>
        <taxon>Embryophyta</taxon>
        <taxon>Tracheophyta</taxon>
        <taxon>Spermatophyta</taxon>
        <taxon>Magnoliopsida</taxon>
        <taxon>Liliopsida</taxon>
        <taxon>Poales</taxon>
        <taxon>Poaceae</taxon>
        <taxon>BOP clade</taxon>
        <taxon>Oryzoideae</taxon>
        <taxon>Oryzeae</taxon>
        <taxon>Oryzinae</taxon>
        <taxon>Oryza</taxon>
        <taxon>Oryza sativa</taxon>
    </lineage>
</organism>
<sequence>MAAARAAVPIAVFLLLVLAEADPAAATRSPSAFVQNAIYSNRITIFSKTYCPYSMRAKRIFRDLKENPYIVELDLREDGREIQSVLLDLVGRHTVPQVFVNGQHVGGSDDTANAHSNGQLQKLLGNSQSQR</sequence>
<accession>Q6H628</accession>
<accession>A3A9K2</accession>
<feature type="chain" id="PRO_0000271275" description="Monothiol glutaredoxin-S6">
    <location>
        <begin position="1"/>
        <end position="131"/>
    </location>
</feature>
<feature type="domain" description="Glutaredoxin" evidence="3">
    <location>
        <begin position="31"/>
        <end position="131"/>
    </location>
</feature>
<feature type="binding site" evidence="2">
    <location>
        <position position="51"/>
    </location>
    <ligand>
        <name>[2Fe-2S] cluster</name>
        <dbReference type="ChEBI" id="CHEBI:190135"/>
        <note>ligand shared between dimeric partners</note>
    </ligand>
</feature>
<dbReference type="EMBL" id="AP004839">
    <property type="protein sequence ID" value="BAD25520.1"/>
    <property type="molecule type" value="Genomic_DNA"/>
</dbReference>
<dbReference type="EMBL" id="AP005306">
    <property type="protein sequence ID" value="BAD25821.1"/>
    <property type="molecule type" value="Genomic_DNA"/>
</dbReference>
<dbReference type="EMBL" id="AP008208">
    <property type="protein sequence ID" value="BAF09488.1"/>
    <property type="molecule type" value="Genomic_DNA"/>
</dbReference>
<dbReference type="EMBL" id="AP014958">
    <property type="protein sequence ID" value="BAS80028.1"/>
    <property type="molecule type" value="Genomic_DNA"/>
</dbReference>
<dbReference type="EMBL" id="CM000139">
    <property type="protein sequence ID" value="EAZ23991.1"/>
    <property type="molecule type" value="Genomic_DNA"/>
</dbReference>
<dbReference type="EMBL" id="AK067828">
    <property type="protein sequence ID" value="BAG90627.1"/>
    <property type="molecule type" value="mRNA"/>
</dbReference>
<dbReference type="RefSeq" id="XP_015623237.1">
    <property type="nucleotide sequence ID" value="XM_015767751.1"/>
</dbReference>
<dbReference type="SMR" id="Q6H628"/>
<dbReference type="FunCoup" id="Q6H628">
    <property type="interactions" value="1216"/>
</dbReference>
<dbReference type="STRING" id="39947.Q6H628"/>
<dbReference type="PaxDb" id="39947-Q6H628"/>
<dbReference type="EnsemblPlants" id="Os02t0646400-01">
    <property type="protein sequence ID" value="Os02t0646400-01"/>
    <property type="gene ID" value="Os02g0646400"/>
</dbReference>
<dbReference type="Gramene" id="Os02t0646400-01">
    <property type="protein sequence ID" value="Os02t0646400-01"/>
    <property type="gene ID" value="Os02g0646400"/>
</dbReference>
<dbReference type="KEGG" id="dosa:Os02g0646400"/>
<dbReference type="eggNOG" id="KOG1752">
    <property type="taxonomic scope" value="Eukaryota"/>
</dbReference>
<dbReference type="HOGENOM" id="CLU_026126_7_2_1"/>
<dbReference type="InParanoid" id="Q6H628"/>
<dbReference type="OMA" id="YSMEARE"/>
<dbReference type="OrthoDB" id="418495at2759"/>
<dbReference type="Proteomes" id="UP000000763">
    <property type="component" value="Chromosome 2"/>
</dbReference>
<dbReference type="Proteomes" id="UP000007752">
    <property type="component" value="Chromosome 2"/>
</dbReference>
<dbReference type="Proteomes" id="UP000059680">
    <property type="component" value="Chromosome 2"/>
</dbReference>
<dbReference type="GO" id="GO:0005737">
    <property type="term" value="C:cytoplasm"/>
    <property type="evidence" value="ECO:0000318"/>
    <property type="project" value="GO_Central"/>
</dbReference>
<dbReference type="GO" id="GO:0051537">
    <property type="term" value="F:2 iron, 2 sulfur cluster binding"/>
    <property type="evidence" value="ECO:0007669"/>
    <property type="project" value="UniProtKB-KW"/>
</dbReference>
<dbReference type="GO" id="GO:0015038">
    <property type="term" value="F:glutathione disulfide oxidoreductase activity"/>
    <property type="evidence" value="ECO:0000318"/>
    <property type="project" value="GO_Central"/>
</dbReference>
<dbReference type="GO" id="GO:0046872">
    <property type="term" value="F:metal ion binding"/>
    <property type="evidence" value="ECO:0007669"/>
    <property type="project" value="UniProtKB-KW"/>
</dbReference>
<dbReference type="GO" id="GO:0034599">
    <property type="term" value="P:cellular response to oxidative stress"/>
    <property type="evidence" value="ECO:0000318"/>
    <property type="project" value="GO_Central"/>
</dbReference>
<dbReference type="CDD" id="cd03419">
    <property type="entry name" value="GRX_GRXh_1_2_like"/>
    <property type="match status" value="1"/>
</dbReference>
<dbReference type="FunFam" id="3.40.30.10:FF:000026">
    <property type="entry name" value="Glutaredoxin 2"/>
    <property type="match status" value="1"/>
</dbReference>
<dbReference type="Gene3D" id="3.40.30.10">
    <property type="entry name" value="Glutaredoxin"/>
    <property type="match status" value="1"/>
</dbReference>
<dbReference type="InterPro" id="IPR002109">
    <property type="entry name" value="Glutaredoxin"/>
</dbReference>
<dbReference type="InterPro" id="IPR011899">
    <property type="entry name" value="Glutaredoxin_euk/vir"/>
</dbReference>
<dbReference type="InterPro" id="IPR014025">
    <property type="entry name" value="Glutaredoxin_subgr"/>
</dbReference>
<dbReference type="InterPro" id="IPR036249">
    <property type="entry name" value="Thioredoxin-like_sf"/>
</dbReference>
<dbReference type="NCBIfam" id="TIGR02180">
    <property type="entry name" value="GRX_euk"/>
    <property type="match status" value="1"/>
</dbReference>
<dbReference type="PANTHER" id="PTHR45694">
    <property type="entry name" value="GLUTAREDOXIN 2"/>
    <property type="match status" value="1"/>
</dbReference>
<dbReference type="PANTHER" id="PTHR45694:SF4">
    <property type="entry name" value="GLUTAREDOXIN-C3"/>
    <property type="match status" value="1"/>
</dbReference>
<dbReference type="Pfam" id="PF00462">
    <property type="entry name" value="Glutaredoxin"/>
    <property type="match status" value="1"/>
</dbReference>
<dbReference type="PRINTS" id="PR00160">
    <property type="entry name" value="GLUTAREDOXIN"/>
</dbReference>
<dbReference type="SUPFAM" id="SSF52833">
    <property type="entry name" value="Thioredoxin-like"/>
    <property type="match status" value="1"/>
</dbReference>
<dbReference type="PROSITE" id="PS51354">
    <property type="entry name" value="GLUTAREDOXIN_2"/>
    <property type="match status" value="1"/>
</dbReference>
<evidence type="ECO:0000250" key="1"/>
<evidence type="ECO:0000255" key="2"/>
<evidence type="ECO:0000255" key="3">
    <source>
        <dbReference type="PROSITE-ProRule" id="PRU00686"/>
    </source>
</evidence>
<evidence type="ECO:0000305" key="4"/>
<evidence type="ECO:0000312" key="5">
    <source>
        <dbReference type="EMBL" id="EAZ23991.1"/>
    </source>
</evidence>